<dbReference type="EC" id="3.4.21.-"/>
<dbReference type="EMBL" id="AE016815">
    <property type="protein sequence ID" value="AAS50905.2"/>
    <property type="molecule type" value="Genomic_DNA"/>
</dbReference>
<dbReference type="RefSeq" id="NP_983081.2">
    <property type="nucleotide sequence ID" value="NM_208434.2"/>
</dbReference>
<dbReference type="SMR" id="Q75D90"/>
<dbReference type="FunCoup" id="Q75D90">
    <property type="interactions" value="147"/>
</dbReference>
<dbReference type="STRING" id="284811.Q75D90"/>
<dbReference type="EnsemblFungi" id="AAS50905">
    <property type="protein sequence ID" value="AAS50905"/>
    <property type="gene ID" value="AGOS_ABR134C"/>
</dbReference>
<dbReference type="GeneID" id="4619191"/>
<dbReference type="KEGG" id="ago:AGOS_ABR134C"/>
<dbReference type="eggNOG" id="KOG1421">
    <property type="taxonomic scope" value="Eukaryota"/>
</dbReference>
<dbReference type="HOGENOM" id="CLU_003212_0_0_1"/>
<dbReference type="InParanoid" id="Q75D90"/>
<dbReference type="OMA" id="FWGHCVF"/>
<dbReference type="OrthoDB" id="4217619at2759"/>
<dbReference type="Proteomes" id="UP000000591">
    <property type="component" value="Chromosome II"/>
</dbReference>
<dbReference type="GO" id="GO:0005634">
    <property type="term" value="C:nucleus"/>
    <property type="evidence" value="ECO:0000318"/>
    <property type="project" value="GO_Central"/>
</dbReference>
<dbReference type="GO" id="GO:0004252">
    <property type="term" value="F:serine-type endopeptidase activity"/>
    <property type="evidence" value="ECO:0000318"/>
    <property type="project" value="GO_Central"/>
</dbReference>
<dbReference type="GO" id="GO:0006915">
    <property type="term" value="P:apoptotic process"/>
    <property type="evidence" value="ECO:0007669"/>
    <property type="project" value="UniProtKB-KW"/>
</dbReference>
<dbReference type="GO" id="GO:0034605">
    <property type="term" value="P:cellular response to heat"/>
    <property type="evidence" value="ECO:0007669"/>
    <property type="project" value="EnsemblFungi"/>
</dbReference>
<dbReference type="GO" id="GO:0006629">
    <property type="term" value="P:lipid metabolic process"/>
    <property type="evidence" value="ECO:0007669"/>
    <property type="project" value="EnsemblFungi"/>
</dbReference>
<dbReference type="GO" id="GO:0043065">
    <property type="term" value="P:positive regulation of apoptotic process"/>
    <property type="evidence" value="ECO:0000318"/>
    <property type="project" value="GO_Central"/>
</dbReference>
<dbReference type="GO" id="GO:0120174">
    <property type="term" value="P:stress-induced homeostatically regulated protein degradation pathway"/>
    <property type="evidence" value="ECO:0007669"/>
    <property type="project" value="EnsemblFungi"/>
</dbReference>
<dbReference type="CDD" id="cd06786">
    <property type="entry name" value="cpPDZ1_ScNma111-like"/>
    <property type="match status" value="1"/>
</dbReference>
<dbReference type="CDD" id="cd10827">
    <property type="entry name" value="cpPDZ3_ScNma111-like"/>
    <property type="match status" value="1"/>
</dbReference>
<dbReference type="CDD" id="cd06719">
    <property type="entry name" value="PDZ2-4_Nma111p-like"/>
    <property type="match status" value="2"/>
</dbReference>
<dbReference type="FunFam" id="2.40.10.120:FF:000013">
    <property type="entry name" value="Pro-apoptotic serine protease NMA111"/>
    <property type="match status" value="1"/>
</dbReference>
<dbReference type="Gene3D" id="2.30.42.10">
    <property type="match status" value="2"/>
</dbReference>
<dbReference type="Gene3D" id="2.40.10.120">
    <property type="match status" value="1"/>
</dbReference>
<dbReference type="InterPro" id="IPR001478">
    <property type="entry name" value="PDZ"/>
</dbReference>
<dbReference type="InterPro" id="IPR025926">
    <property type="entry name" value="PDZ-like_dom"/>
</dbReference>
<dbReference type="InterPro" id="IPR036034">
    <property type="entry name" value="PDZ_sf"/>
</dbReference>
<dbReference type="InterPro" id="IPR009003">
    <property type="entry name" value="Peptidase_S1_PA"/>
</dbReference>
<dbReference type="InterPro" id="IPR001940">
    <property type="entry name" value="Peptidase_S1C"/>
</dbReference>
<dbReference type="PANTHER" id="PTHR46366">
    <property type="entry name" value="PRO-APOPTOTIC SERINE PROTEASE NMA111"/>
    <property type="match status" value="1"/>
</dbReference>
<dbReference type="PANTHER" id="PTHR46366:SF8">
    <property type="entry name" value="PRO-APOPTOTIC SERINE PROTEASE NMA111"/>
    <property type="match status" value="1"/>
</dbReference>
<dbReference type="Pfam" id="PF00595">
    <property type="entry name" value="PDZ"/>
    <property type="match status" value="1"/>
</dbReference>
<dbReference type="Pfam" id="PF12812">
    <property type="entry name" value="PDZ_1"/>
    <property type="match status" value="2"/>
</dbReference>
<dbReference type="Pfam" id="PF13365">
    <property type="entry name" value="Trypsin_2"/>
    <property type="match status" value="1"/>
</dbReference>
<dbReference type="PRINTS" id="PR00834">
    <property type="entry name" value="PROTEASES2C"/>
</dbReference>
<dbReference type="SMART" id="SM00228">
    <property type="entry name" value="PDZ"/>
    <property type="match status" value="2"/>
</dbReference>
<dbReference type="SUPFAM" id="SSF50156">
    <property type="entry name" value="PDZ domain-like"/>
    <property type="match status" value="2"/>
</dbReference>
<dbReference type="SUPFAM" id="SSF50494">
    <property type="entry name" value="Trypsin-like serine proteases"/>
    <property type="match status" value="2"/>
</dbReference>
<accession>Q75D90</accession>
<proteinExistence type="inferred from homology"/>
<feature type="chain" id="PRO_0000320344" description="Pro-apoptotic serine protease NMA111">
    <location>
        <begin position="1"/>
        <end position="977"/>
    </location>
</feature>
<feature type="domain" description="PDZ 1">
    <location>
        <begin position="271"/>
        <end position="356"/>
    </location>
</feature>
<feature type="domain" description="PDZ 2">
    <location>
        <begin position="749"/>
        <end position="835"/>
    </location>
</feature>
<feature type="region of interest" description="Disordered" evidence="3">
    <location>
        <begin position="1"/>
        <end position="36"/>
    </location>
</feature>
<feature type="region of interest" description="Serine protease">
    <location>
        <begin position="64"/>
        <end position="254"/>
    </location>
</feature>
<feature type="active site" description="Charge relay system" evidence="2">
    <location>
        <position position="102"/>
    </location>
</feature>
<feature type="active site" description="Charge relay system" evidence="2">
    <location>
        <position position="133"/>
    </location>
</feature>
<feature type="active site" description="Charge relay system" evidence="2">
    <location>
        <position position="216"/>
    </location>
</feature>
<comment type="function">
    <text evidence="1">Nuclear serine protease which mediates apoptosis.</text>
</comment>
<comment type="subcellular location">
    <subcellularLocation>
        <location evidence="1">Nucleus</location>
    </subcellularLocation>
</comment>
<comment type="similarity">
    <text evidence="4">Belongs to the peptidase S1C family.</text>
</comment>
<keyword id="KW-0053">Apoptosis</keyword>
<keyword id="KW-0378">Hydrolase</keyword>
<keyword id="KW-0539">Nucleus</keyword>
<keyword id="KW-0645">Protease</keyword>
<keyword id="KW-1185">Reference proteome</keyword>
<keyword id="KW-0677">Repeat</keyword>
<keyword id="KW-0720">Serine protease</keyword>
<evidence type="ECO:0000250" key="1"/>
<evidence type="ECO:0000255" key="2"/>
<evidence type="ECO:0000256" key="3">
    <source>
        <dbReference type="SAM" id="MobiDB-lite"/>
    </source>
</evidence>
<evidence type="ECO:0000305" key="4"/>
<name>NM111_EREGS</name>
<reference key="1">
    <citation type="journal article" date="2004" name="Science">
        <title>The Ashbya gossypii genome as a tool for mapping the ancient Saccharomyces cerevisiae genome.</title>
        <authorList>
            <person name="Dietrich F.S."/>
            <person name="Voegeli S."/>
            <person name="Brachat S."/>
            <person name="Lerch A."/>
            <person name="Gates K."/>
            <person name="Steiner S."/>
            <person name="Mohr C."/>
            <person name="Poehlmann R."/>
            <person name="Luedi P."/>
            <person name="Choi S."/>
            <person name="Wing R.A."/>
            <person name="Flavier A."/>
            <person name="Gaffney T.D."/>
            <person name="Philippsen P."/>
        </authorList>
    </citation>
    <scope>NUCLEOTIDE SEQUENCE [LARGE SCALE GENOMIC DNA]</scope>
    <source>
        <strain>ATCC 10895 / CBS 109.51 / FGSC 9923 / NRRL Y-1056</strain>
    </source>
</reference>
<reference key="2">
    <citation type="journal article" date="2013" name="G3 (Bethesda)">
        <title>Genomes of Ashbya fungi isolated from insects reveal four mating-type loci, numerous translocations, lack of transposons, and distinct gene duplications.</title>
        <authorList>
            <person name="Dietrich F.S."/>
            <person name="Voegeli S."/>
            <person name="Kuo S."/>
            <person name="Philippsen P."/>
        </authorList>
    </citation>
    <scope>GENOME REANNOTATION</scope>
    <scope>SEQUENCE REVISION TO 37-47 AND 50</scope>
    <source>
        <strain>ATCC 10895 / CBS 109.51 / FGSC 9923 / NRRL Y-1056</strain>
    </source>
</reference>
<gene>
    <name type="primary">NMA111</name>
    <name type="ordered locus">ABR134C</name>
</gene>
<protein>
    <recommendedName>
        <fullName>Pro-apoptotic serine protease NMA111</fullName>
        <ecNumber>3.4.21.-</ecNumber>
    </recommendedName>
</protein>
<sequence length="977" mass="108313">MTIQAHKRTLSEVSTSSVGQLKRREGYTEDYTDEGSDIDMPEYVTDSANNQQWQDTISRVVQSVVSVHFAQVAPFDCESALVSEATGFVVDAKLGIILTNRHVVGAGPFSGYAVFDNHEECDVIPIYRDPVHDFGFLKFDPSTIKYMNVQALELKPALAKVGSEIRVVGNDAGEKLSILAGFISRVDRNAPDYGELTYNDFNTEYIQAAAAASGGSSGSPVVNIDGYAVALQAGGSTEASTDFFLPLDRILRALRCIQGSQPITRGTIQTQWLLKPYDECRRMGLSPESEAKAREQFPGKIGLLVAETILREGPADKSIKEGDILISINGQMICSFIQVDAILDENVGKPITLVVQRSGIDITVECTVGDLHAITPSRYVEVCGATFNELSYQMARYYAIPVRAVFLSSATGSFCFDTKEKLGWIVDEVNNQPTPTLDTFIEVMSTIPDCSRVTVQYHHLVDQHSPHVTTVYIDRHWCNEFRIFERNDETGIWDYKNLADPIPALPLKPQTAKFIDLPISNPKLARLARMLVMVSTIGPVPLDSVDPEPRKAAGLVLDAKQGYVIVSRRIVPHDCMDVFVTIAESVLVPASVVFLHPTQNYVIVKYDPAQVQAAVETPILSTERLKRGDKVQFVGYTHNFRSVSSETTVTDISSLSIPSNMVPRYRATNLEAISIESSVGSRCHSGILADDDGTVRALWLSFLGEKQDEKDKIYLMGLDLVDIGEVVEVLKKGKIPRVNIVDSGFGSISVLQARLRGVPEEWIKRMESESENRLQFITVTRVSYTDEEQKLVSGDIILSVNDQLVKQMRDLEGIVTTTDVPAVQQVLRFKIVRKGSIMDLDIKTIEVEETSKIVIFAGCILQAPHHAVRQAMLNIPSGVYCTFRGQSSPAIQYGISSTNFITHVNEIETPDLDRFLEVVRTIPDNTYCKIRLVTFDNVPFAISLKTNYHYFPTSELSRNSDTGRWIEHLCNATPAKN</sequence>
<organism>
    <name type="scientific">Eremothecium gossypii (strain ATCC 10895 / CBS 109.51 / FGSC 9923 / NRRL Y-1056)</name>
    <name type="common">Yeast</name>
    <name type="synonym">Ashbya gossypii</name>
    <dbReference type="NCBI Taxonomy" id="284811"/>
    <lineage>
        <taxon>Eukaryota</taxon>
        <taxon>Fungi</taxon>
        <taxon>Dikarya</taxon>
        <taxon>Ascomycota</taxon>
        <taxon>Saccharomycotina</taxon>
        <taxon>Saccharomycetes</taxon>
        <taxon>Saccharomycetales</taxon>
        <taxon>Saccharomycetaceae</taxon>
        <taxon>Eremothecium</taxon>
    </lineage>
</organism>